<organism>
    <name type="scientific">Saccharomyces pastorianus (strain ATCC 76670 / Carlsberg bottom yeast no.2 / CBS 1503 / CLIB 180 / NBRC 10610 / NRRL Y-1525)</name>
    <name type="common">Saaz-type lager yeast</name>
    <name type="synonym">Saccharomyces monacensis</name>
    <dbReference type="NCBI Taxonomy" id="1429090"/>
    <lineage>
        <taxon>Eukaryota</taxon>
        <taxon>Fungi</taxon>
        <taxon>Dikarya</taxon>
        <taxon>Ascomycota</taxon>
        <taxon>Saccharomycotina</taxon>
        <taxon>Saccharomycetes</taxon>
        <taxon>Saccharomycetales</taxon>
        <taxon>Saccharomycetaceae</taxon>
        <taxon>Saccharomyces</taxon>
    </lineage>
</organism>
<keyword id="KW-0446">Lipid-binding</keyword>
<keyword id="KW-0813">Transport</keyword>
<gene>
    <name type="primary">ACB2</name>
</gene>
<feature type="initiator methionine" description="Removed" evidence="1">
    <location>
        <position position="1"/>
    </location>
</feature>
<feature type="chain" id="PRO_0000214014" description="Acyl-CoA-binding protein 2">
    <location>
        <begin position="2"/>
        <end position="87"/>
    </location>
</feature>
<feature type="domain" description="ACB" evidence="2">
    <location>
        <begin position="2"/>
        <end position="87"/>
    </location>
</feature>
<feature type="binding site" evidence="1">
    <location>
        <begin position="29"/>
        <end position="33"/>
    </location>
    <ligand>
        <name>an acyl-CoA</name>
        <dbReference type="ChEBI" id="CHEBI:58342"/>
    </ligand>
</feature>
<feature type="binding site" evidence="1">
    <location>
        <position position="51"/>
    </location>
    <ligand>
        <name>an acyl-CoA</name>
        <dbReference type="ChEBI" id="CHEBI:58342"/>
    </ligand>
</feature>
<feature type="binding site" evidence="1">
    <location>
        <position position="55"/>
    </location>
    <ligand>
        <name>an acyl-CoA</name>
        <dbReference type="ChEBI" id="CHEBI:58342"/>
    </ligand>
</feature>
<feature type="binding site" evidence="1">
    <location>
        <position position="74"/>
    </location>
    <ligand>
        <name>an acyl-CoA</name>
        <dbReference type="ChEBI" id="CHEBI:58342"/>
    </ligand>
</feature>
<comment type="function">
    <text evidence="1">Binds medium- and long-chain acyl-CoA esters with very high affinity and may function as an intracellular carrier of acyl-CoA esters.</text>
</comment>
<comment type="similarity">
    <text evidence="3">Belongs to the ACBP family.</text>
</comment>
<protein>
    <recommendedName>
        <fullName>Acyl-CoA-binding protein 2</fullName>
    </recommendedName>
    <alternativeName>
        <fullName>ACBP type 2</fullName>
    </alternativeName>
</protein>
<name>ACBP2_SACMO</name>
<reference key="1">
    <citation type="journal article" date="1997" name="Yeast">
        <title>Saccharomyces carlsbergensis contains two functional genes encoding the acyl-CoA binding protein, one similar to the ACB1 gene from S. cerevisiae and one identical to the ACB1 gene from S. monacensis.</title>
        <authorList>
            <person name="Borsting C."/>
            <person name="Hummel R."/>
            <person name="Schultz E.R."/>
            <person name="Rose T.M."/>
            <person name="Pedersen M.B."/>
            <person name="Knudsen J."/>
            <person name="Kristiansen K."/>
        </authorList>
    </citation>
    <scope>NUCLEOTIDE SEQUENCE [GENOMIC DNA]</scope>
    <source>
        <strain>ATCC 76670 / Carlsberg bottom yeast no.2 / CBS 1503 / CLIB 180 / NBRC 10610 / NRRL Y-1525</strain>
    </source>
</reference>
<sequence>MVSQLFEEKAKAVNELPTKPSTDELLELYGLYKQATVGDNDKEKPGIFNMKDRYKWEAWEDLKGKSQEDAEKEYIAYVDNLIAKYSS</sequence>
<dbReference type="EMBL" id="Y08688">
    <property type="protein sequence ID" value="CAA69946.1"/>
    <property type="molecule type" value="Genomic_DNA"/>
</dbReference>
<dbReference type="SMR" id="P61868"/>
<dbReference type="GO" id="GO:0000062">
    <property type="term" value="F:fatty-acyl-CoA binding"/>
    <property type="evidence" value="ECO:0007669"/>
    <property type="project" value="InterPro"/>
</dbReference>
<dbReference type="GO" id="GO:0006631">
    <property type="term" value="P:fatty acid metabolic process"/>
    <property type="evidence" value="ECO:0007669"/>
    <property type="project" value="TreeGrafter"/>
</dbReference>
<dbReference type="FunFam" id="1.20.80.10:FF:000010">
    <property type="entry name" value="Acyl-CoA-binding domain-containing protein 5"/>
    <property type="match status" value="1"/>
</dbReference>
<dbReference type="Gene3D" id="1.20.80.10">
    <property type="match status" value="1"/>
</dbReference>
<dbReference type="InterPro" id="IPR022408">
    <property type="entry name" value="Acyl-CoA-binding_prot_CS"/>
</dbReference>
<dbReference type="InterPro" id="IPR000582">
    <property type="entry name" value="Acyl-CoA-binding_protein"/>
</dbReference>
<dbReference type="InterPro" id="IPR035984">
    <property type="entry name" value="Acyl-CoA-binding_sf"/>
</dbReference>
<dbReference type="InterPro" id="IPR014352">
    <property type="entry name" value="FERM/acyl-CoA-bd_prot_sf"/>
</dbReference>
<dbReference type="PANTHER" id="PTHR23310:SF62">
    <property type="entry name" value="ACYL-COA BINDING PROTEIN 1, ISOFORM A"/>
    <property type="match status" value="1"/>
</dbReference>
<dbReference type="PANTHER" id="PTHR23310">
    <property type="entry name" value="ACYL-COA-BINDING PROTEIN, ACBP"/>
    <property type="match status" value="1"/>
</dbReference>
<dbReference type="Pfam" id="PF00887">
    <property type="entry name" value="ACBP"/>
    <property type="match status" value="1"/>
</dbReference>
<dbReference type="PRINTS" id="PR00689">
    <property type="entry name" value="ACOABINDINGP"/>
</dbReference>
<dbReference type="SUPFAM" id="SSF47027">
    <property type="entry name" value="Acyl-CoA binding protein"/>
    <property type="match status" value="1"/>
</dbReference>
<dbReference type="PROSITE" id="PS00880">
    <property type="entry name" value="ACB_1"/>
    <property type="match status" value="1"/>
</dbReference>
<dbReference type="PROSITE" id="PS51228">
    <property type="entry name" value="ACB_2"/>
    <property type="match status" value="1"/>
</dbReference>
<accession>P61868</accession>
<accession>Q92272</accession>
<accession>Q96496</accession>
<evidence type="ECO:0000250" key="1"/>
<evidence type="ECO:0000255" key="2">
    <source>
        <dbReference type="PROSITE-ProRule" id="PRU00573"/>
    </source>
</evidence>
<evidence type="ECO:0000305" key="3"/>
<proteinExistence type="inferred from homology"/>